<name>MSHC_FRACC</name>
<organism>
    <name type="scientific">Frankia casuarinae (strain DSM 45818 / CECT 9043 / HFP020203 / CcI3)</name>
    <dbReference type="NCBI Taxonomy" id="106370"/>
    <lineage>
        <taxon>Bacteria</taxon>
        <taxon>Bacillati</taxon>
        <taxon>Actinomycetota</taxon>
        <taxon>Actinomycetes</taxon>
        <taxon>Frankiales</taxon>
        <taxon>Frankiaceae</taxon>
        <taxon>Frankia</taxon>
    </lineage>
</organism>
<keyword id="KW-0067">ATP-binding</keyword>
<keyword id="KW-0436">Ligase</keyword>
<keyword id="KW-0479">Metal-binding</keyword>
<keyword id="KW-0547">Nucleotide-binding</keyword>
<keyword id="KW-1185">Reference proteome</keyword>
<keyword id="KW-0862">Zinc</keyword>
<accession>Q2J9N8</accession>
<reference key="1">
    <citation type="journal article" date="2007" name="Genome Res.">
        <title>Genome characteristics of facultatively symbiotic Frankia sp. strains reflect host range and host plant biogeography.</title>
        <authorList>
            <person name="Normand P."/>
            <person name="Lapierre P."/>
            <person name="Tisa L.S."/>
            <person name="Gogarten J.P."/>
            <person name="Alloisio N."/>
            <person name="Bagnarol E."/>
            <person name="Bassi C.A."/>
            <person name="Berry A.M."/>
            <person name="Bickhart D.M."/>
            <person name="Choisne N."/>
            <person name="Couloux A."/>
            <person name="Cournoyer B."/>
            <person name="Cruveiller S."/>
            <person name="Daubin V."/>
            <person name="Demange N."/>
            <person name="Francino M.P."/>
            <person name="Goltsman E."/>
            <person name="Huang Y."/>
            <person name="Kopp O.R."/>
            <person name="Labarre L."/>
            <person name="Lapidus A."/>
            <person name="Lavire C."/>
            <person name="Marechal J."/>
            <person name="Martinez M."/>
            <person name="Mastronunzio J.E."/>
            <person name="Mullin B.C."/>
            <person name="Niemann J."/>
            <person name="Pujic P."/>
            <person name="Rawnsley T."/>
            <person name="Rouy Z."/>
            <person name="Schenowitz C."/>
            <person name="Sellstedt A."/>
            <person name="Tavares F."/>
            <person name="Tomkins J.P."/>
            <person name="Vallenet D."/>
            <person name="Valverde C."/>
            <person name="Wall L.G."/>
            <person name="Wang Y."/>
            <person name="Medigue C."/>
            <person name="Benson D.R."/>
        </authorList>
    </citation>
    <scope>NUCLEOTIDE SEQUENCE [LARGE SCALE GENOMIC DNA]</scope>
    <source>
        <strain>DSM 45818 / CECT 9043 / HFP020203 / CcI3</strain>
    </source>
</reference>
<comment type="function">
    <text evidence="1">Catalyzes the ATP-dependent condensation of GlcN-Ins and L-cysteine to form L-Cys-GlcN-Ins.</text>
</comment>
<comment type="catalytic activity">
    <reaction evidence="1">
        <text>1D-myo-inositol 2-amino-2-deoxy-alpha-D-glucopyranoside + L-cysteine + ATP = 1D-myo-inositol 2-(L-cysteinylamino)-2-deoxy-alpha-D-glucopyranoside + AMP + diphosphate + H(+)</text>
        <dbReference type="Rhea" id="RHEA:26176"/>
        <dbReference type="ChEBI" id="CHEBI:15378"/>
        <dbReference type="ChEBI" id="CHEBI:30616"/>
        <dbReference type="ChEBI" id="CHEBI:33019"/>
        <dbReference type="ChEBI" id="CHEBI:35235"/>
        <dbReference type="ChEBI" id="CHEBI:58886"/>
        <dbReference type="ChEBI" id="CHEBI:58887"/>
        <dbReference type="ChEBI" id="CHEBI:456215"/>
        <dbReference type="EC" id="6.3.1.13"/>
    </reaction>
</comment>
<comment type="cofactor">
    <cofactor evidence="1">
        <name>Zn(2+)</name>
        <dbReference type="ChEBI" id="CHEBI:29105"/>
    </cofactor>
    <text evidence="1">Binds 1 zinc ion per subunit.</text>
</comment>
<comment type="subunit">
    <text evidence="1">Monomer.</text>
</comment>
<comment type="similarity">
    <text evidence="1">Belongs to the class-I aminoacyl-tRNA synthetase family. MshC subfamily.</text>
</comment>
<sequence length="464" mass="50147">MLSATLRLLSLCPPESRFAVTLTRMQAWPSPPIRSLPGHGKPLRIFDTATSSVRELAPAVTARLYVCGITPYDATHLGHAFTYLTYDLAQRVLRDAGHHVHYVQNVTDVDDPLLERATRDGLDWRALADREIDLFREDMTALRMLAPDAYVGVVEAIPMIVDMVVELVDRGAAYQVDDDLYFSIATAPAFGEISHLSRAEMLAICAERGGDPRRTGKKDPLDPLLWRAHRPGEPSWPSPFGPGRPGWHIECSAIARHYLGGVIDIQGGGTDLSFPHHECSAAHAEVAAGIRPFARSYVHTAMVSLDGHKMSKSRGNLEFVSRLRRAGVDPAALRLALLDHRHTEDWEWTPGLLDDAVDRMNRWRAAVALPTGPDAMGLLAAVRERLADDLDAPGAVAAVDAWVGAALADAGGSAGAGPDPTHQGGPVRGSGGDVPAWGEAPALVRRLVDTLLGVDLEPVRPRGS</sequence>
<proteinExistence type="inferred from homology"/>
<feature type="chain" id="PRO_0000400446" description="L-cysteine:1D-myo-inositol 2-amino-2-deoxy-alpha-D-glucopyranoside ligase">
    <location>
        <begin position="1"/>
        <end position="464"/>
    </location>
</feature>
<feature type="region of interest" description="Disordered" evidence="2">
    <location>
        <begin position="410"/>
        <end position="435"/>
    </location>
</feature>
<feature type="short sequence motif" description="'HIGH' region" evidence="1">
    <location>
        <begin position="69"/>
        <end position="79"/>
    </location>
</feature>
<feature type="short sequence motif" description="'ERGGDP' region" evidence="1">
    <location>
        <begin position="207"/>
        <end position="212"/>
    </location>
</feature>
<feature type="short sequence motif" description="'KMSKS' region" evidence="1">
    <location>
        <begin position="309"/>
        <end position="313"/>
    </location>
</feature>
<feature type="binding site" evidence="1">
    <location>
        <begin position="67"/>
        <end position="70"/>
    </location>
    <ligand>
        <name>L-cysteinyl-5'-AMP</name>
        <dbReference type="ChEBI" id="CHEBI:144924"/>
    </ligand>
</feature>
<feature type="binding site" evidence="1">
    <location>
        <position position="67"/>
    </location>
    <ligand>
        <name>Zn(2+)</name>
        <dbReference type="ChEBI" id="CHEBI:29105"/>
    </ligand>
</feature>
<feature type="binding site" evidence="1">
    <location>
        <position position="82"/>
    </location>
    <ligand>
        <name>L-cysteinyl-5'-AMP</name>
        <dbReference type="ChEBI" id="CHEBI:144924"/>
    </ligand>
</feature>
<feature type="binding site" evidence="1">
    <location>
        <begin position="105"/>
        <end position="107"/>
    </location>
    <ligand>
        <name>L-cysteinyl-5'-AMP</name>
        <dbReference type="ChEBI" id="CHEBI:144924"/>
    </ligand>
</feature>
<feature type="binding site" evidence="1">
    <location>
        <position position="247"/>
    </location>
    <ligand>
        <name>L-cysteinyl-5'-AMP</name>
        <dbReference type="ChEBI" id="CHEBI:144924"/>
    </ligand>
</feature>
<feature type="binding site" evidence="1">
    <location>
        <position position="251"/>
    </location>
    <ligand>
        <name>Zn(2+)</name>
        <dbReference type="ChEBI" id="CHEBI:29105"/>
    </ligand>
</feature>
<feature type="binding site" evidence="1">
    <location>
        <begin position="269"/>
        <end position="271"/>
    </location>
    <ligand>
        <name>L-cysteinyl-5'-AMP</name>
        <dbReference type="ChEBI" id="CHEBI:144924"/>
    </ligand>
</feature>
<feature type="binding site" evidence="1">
    <location>
        <position position="276"/>
    </location>
    <ligand>
        <name>Zn(2+)</name>
        <dbReference type="ChEBI" id="CHEBI:29105"/>
    </ligand>
</feature>
<feature type="binding site" evidence="1">
    <location>
        <position position="303"/>
    </location>
    <ligand>
        <name>L-cysteinyl-5'-AMP</name>
        <dbReference type="ChEBI" id="CHEBI:144924"/>
    </ligand>
</feature>
<gene>
    <name evidence="1" type="primary">mshC</name>
    <name type="ordered locus">Francci3_2642</name>
</gene>
<evidence type="ECO:0000255" key="1">
    <source>
        <dbReference type="HAMAP-Rule" id="MF_01697"/>
    </source>
</evidence>
<evidence type="ECO:0000256" key="2">
    <source>
        <dbReference type="SAM" id="MobiDB-lite"/>
    </source>
</evidence>
<protein>
    <recommendedName>
        <fullName evidence="1">L-cysteine:1D-myo-inositol 2-amino-2-deoxy-alpha-D-glucopyranoside ligase</fullName>
        <shortName evidence="1">L-Cys:GlcN-Ins ligase</shortName>
        <ecNumber evidence="1">6.3.1.13</ecNumber>
    </recommendedName>
    <alternativeName>
        <fullName evidence="1">Mycothiol ligase</fullName>
        <shortName evidence="1">MSH ligase</shortName>
    </alternativeName>
</protein>
<dbReference type="EC" id="6.3.1.13" evidence="1"/>
<dbReference type="EMBL" id="CP000249">
    <property type="protein sequence ID" value="ABD12004.1"/>
    <property type="molecule type" value="Genomic_DNA"/>
</dbReference>
<dbReference type="RefSeq" id="WP_011437039.1">
    <property type="nucleotide sequence ID" value="NZ_MSEA01000050.1"/>
</dbReference>
<dbReference type="SMR" id="Q2J9N8"/>
<dbReference type="STRING" id="106370.Francci3_2642"/>
<dbReference type="KEGG" id="fra:Francci3_2642"/>
<dbReference type="eggNOG" id="COG0215">
    <property type="taxonomic scope" value="Bacteria"/>
</dbReference>
<dbReference type="HOGENOM" id="CLU_013528_0_0_11"/>
<dbReference type="OrthoDB" id="9815130at2"/>
<dbReference type="PhylomeDB" id="Q2J9N8"/>
<dbReference type="Proteomes" id="UP000001937">
    <property type="component" value="Chromosome"/>
</dbReference>
<dbReference type="GO" id="GO:0005829">
    <property type="term" value="C:cytosol"/>
    <property type="evidence" value="ECO:0007669"/>
    <property type="project" value="TreeGrafter"/>
</dbReference>
<dbReference type="GO" id="GO:0005524">
    <property type="term" value="F:ATP binding"/>
    <property type="evidence" value="ECO:0007669"/>
    <property type="project" value="UniProtKB-KW"/>
</dbReference>
<dbReference type="GO" id="GO:0035446">
    <property type="term" value="F:cysteine-glucosaminylinositol ligase activity"/>
    <property type="evidence" value="ECO:0007669"/>
    <property type="project" value="UniProtKB-UniRule"/>
</dbReference>
<dbReference type="GO" id="GO:0004817">
    <property type="term" value="F:cysteine-tRNA ligase activity"/>
    <property type="evidence" value="ECO:0007669"/>
    <property type="project" value="TreeGrafter"/>
</dbReference>
<dbReference type="GO" id="GO:0008270">
    <property type="term" value="F:zinc ion binding"/>
    <property type="evidence" value="ECO:0007669"/>
    <property type="project" value="UniProtKB-UniRule"/>
</dbReference>
<dbReference type="GO" id="GO:0006423">
    <property type="term" value="P:cysteinyl-tRNA aminoacylation"/>
    <property type="evidence" value="ECO:0007669"/>
    <property type="project" value="TreeGrafter"/>
</dbReference>
<dbReference type="GO" id="GO:0010125">
    <property type="term" value="P:mycothiol biosynthetic process"/>
    <property type="evidence" value="ECO:0007669"/>
    <property type="project" value="UniProtKB-UniRule"/>
</dbReference>
<dbReference type="FunFam" id="3.40.50.620:FF:000134">
    <property type="entry name" value="L-cysteine:1D-myo-inositol 2-amino-2-deoxy-alpha-D-glucopyranoside ligase"/>
    <property type="match status" value="1"/>
</dbReference>
<dbReference type="Gene3D" id="1.20.120.640">
    <property type="entry name" value="Anticodon-binding domain of a subclass of class I aminoacyl-tRNA synthetases"/>
    <property type="match status" value="1"/>
</dbReference>
<dbReference type="Gene3D" id="3.40.50.620">
    <property type="entry name" value="HUPs"/>
    <property type="match status" value="1"/>
</dbReference>
<dbReference type="HAMAP" id="MF_01697">
    <property type="entry name" value="MshC"/>
    <property type="match status" value="1"/>
</dbReference>
<dbReference type="InterPro" id="IPR024909">
    <property type="entry name" value="Cys-tRNA/MSH_ligase"/>
</dbReference>
<dbReference type="InterPro" id="IPR017812">
    <property type="entry name" value="Mycothiol_ligase_MshC"/>
</dbReference>
<dbReference type="InterPro" id="IPR014729">
    <property type="entry name" value="Rossmann-like_a/b/a_fold"/>
</dbReference>
<dbReference type="InterPro" id="IPR032678">
    <property type="entry name" value="tRNA-synt_1_cat_dom"/>
</dbReference>
<dbReference type="NCBIfam" id="TIGR03447">
    <property type="entry name" value="mycothiol_MshC"/>
    <property type="match status" value="1"/>
</dbReference>
<dbReference type="PANTHER" id="PTHR10890:SF3">
    <property type="entry name" value="CYSTEINE--TRNA LIGASE, CYTOPLASMIC"/>
    <property type="match status" value="1"/>
</dbReference>
<dbReference type="PANTHER" id="PTHR10890">
    <property type="entry name" value="CYSTEINYL-TRNA SYNTHETASE"/>
    <property type="match status" value="1"/>
</dbReference>
<dbReference type="Pfam" id="PF01406">
    <property type="entry name" value="tRNA-synt_1e"/>
    <property type="match status" value="1"/>
</dbReference>
<dbReference type="PRINTS" id="PR00983">
    <property type="entry name" value="TRNASYNTHCYS"/>
</dbReference>
<dbReference type="SUPFAM" id="SSF52374">
    <property type="entry name" value="Nucleotidylyl transferase"/>
    <property type="match status" value="1"/>
</dbReference>